<organism>
    <name type="scientific">Eremothecium gossypii (strain ATCC 10895 / CBS 109.51 / FGSC 9923 / NRRL Y-1056)</name>
    <name type="common">Yeast</name>
    <name type="synonym">Ashbya gossypii</name>
    <dbReference type="NCBI Taxonomy" id="284811"/>
    <lineage>
        <taxon>Eukaryota</taxon>
        <taxon>Fungi</taxon>
        <taxon>Dikarya</taxon>
        <taxon>Ascomycota</taxon>
        <taxon>Saccharomycotina</taxon>
        <taxon>Saccharomycetes</taxon>
        <taxon>Saccharomycetales</taxon>
        <taxon>Saccharomycetaceae</taxon>
        <taxon>Eremothecium</taxon>
    </lineage>
</organism>
<evidence type="ECO:0000250" key="1"/>
<evidence type="ECO:0000255" key="2"/>
<evidence type="ECO:0000305" key="3"/>
<comment type="function">
    <text evidence="1">Required for nuclear membrane fusion during karyogamy.</text>
</comment>
<comment type="subcellular location">
    <subcellularLocation>
        <location evidence="1">Endoplasmic reticulum membrane</location>
        <topology evidence="1">Multi-pass membrane protein</topology>
    </subcellularLocation>
    <subcellularLocation>
        <location evidence="1">Nucleus membrane</location>
        <topology evidence="1">Multi-pass membrane protein</topology>
    </subcellularLocation>
</comment>
<comment type="similarity">
    <text evidence="3">Belongs to the KAR5 family.</text>
</comment>
<feature type="signal peptide" evidence="2">
    <location>
        <begin position="1"/>
        <end position="19"/>
    </location>
</feature>
<feature type="chain" id="PRO_0000308769" description="Nuclear fusion protein KAR5">
    <location>
        <begin position="20"/>
        <end position="478"/>
    </location>
</feature>
<feature type="topological domain" description="Lumenal" evidence="1">
    <location>
        <begin position="20"/>
        <end position="419"/>
    </location>
</feature>
<feature type="transmembrane region" description="Helical" evidence="2">
    <location>
        <begin position="420"/>
        <end position="442"/>
    </location>
</feature>
<feature type="topological domain" description="Cytoplasmic" evidence="1">
    <location>
        <begin position="443"/>
        <end position="454"/>
    </location>
</feature>
<feature type="transmembrane region" description="Helical" evidence="2">
    <location>
        <begin position="455"/>
        <end position="477"/>
    </location>
</feature>
<feature type="topological domain" description="Lumenal" evidence="1">
    <location>
        <position position="478"/>
    </location>
</feature>
<feature type="glycosylation site" description="N-linked (GlcNAc...) asparagine" evidence="2">
    <location>
        <position position="159"/>
    </location>
</feature>
<feature type="glycosylation site" description="N-linked (GlcNAc...) asparagine" evidence="2">
    <location>
        <position position="371"/>
    </location>
</feature>
<feature type="glycosylation site" description="N-linked (GlcNAc...) asparagine" evidence="2">
    <location>
        <position position="392"/>
    </location>
</feature>
<name>KAR5_EREGS</name>
<accession>Q759Y0</accession>
<gene>
    <name type="primary">KAR5</name>
    <name type="ordered locus">ADR143W</name>
</gene>
<reference key="1">
    <citation type="journal article" date="2004" name="Science">
        <title>The Ashbya gossypii genome as a tool for mapping the ancient Saccharomyces cerevisiae genome.</title>
        <authorList>
            <person name="Dietrich F.S."/>
            <person name="Voegeli S."/>
            <person name="Brachat S."/>
            <person name="Lerch A."/>
            <person name="Gates K."/>
            <person name="Steiner S."/>
            <person name="Mohr C."/>
            <person name="Poehlmann R."/>
            <person name="Luedi P."/>
            <person name="Choi S."/>
            <person name="Wing R.A."/>
            <person name="Flavier A."/>
            <person name="Gaffney T.D."/>
            <person name="Philippsen P."/>
        </authorList>
    </citation>
    <scope>NUCLEOTIDE SEQUENCE [LARGE SCALE GENOMIC DNA]</scope>
    <source>
        <strain>ATCC 10895 / CBS 109.51 / FGSC 9923 / NRRL Y-1056</strain>
    </source>
</reference>
<reference key="2">
    <citation type="journal article" date="2013" name="G3 (Bethesda)">
        <title>Genomes of Ashbya fungi isolated from insects reveal four mating-type loci, numerous translocations, lack of transposons, and distinct gene duplications.</title>
        <authorList>
            <person name="Dietrich F.S."/>
            <person name="Voegeli S."/>
            <person name="Kuo S."/>
            <person name="Philippsen P."/>
        </authorList>
    </citation>
    <scope>GENOME REANNOTATION</scope>
    <scope>SEQUENCE REVISION TO 224; 275 AND 384</scope>
    <source>
        <strain>ATCC 10895 / CBS 109.51 / FGSC 9923 / NRRL Y-1056</strain>
    </source>
</reference>
<sequence>MLEILLFLCVIIQRSHINAEITHVVSHLAETALRQDTNFQLLSQDIIAKKFPILDSSCVRRALSDFLPQCLQYGFETVPSDVRTQAAVKLSICELQASGVDNMPPECVGAVHFGACLRAMERTPQWWTTYSGNYQHLPSTCFENALPYEKEQLLSLFLNITDVYSNFQDDLVVDLEKYRANFEATVEASLRLMKASLMEGTHEIVNQLKDDLNYVNSKLADMGETITEHTDNVRTVFNDISDELNDYDMAGQIAHLKEDTMSLWQKINSDMGTYHDVQMSSLYNINAVFDTFYNRATESVQQVRTSVIESQLETLDLIADFNSLVRKSILPVLADELQPQLQEMSVSISRSLVGLSASYNEHLQAWSNRVNETLSEMESHLNNTMSQVEHMNDSIETLENKVFVLVSLGNALTTYVKWIYTFSRALISGYGIVTLIMSMLVVRYSIKLNSSWIKVLGRSTFILVAVVLGARTGSMLSY</sequence>
<protein>
    <recommendedName>
        <fullName>Nuclear fusion protein KAR5</fullName>
    </recommendedName>
    <alternativeName>
        <fullName>Karyogamy protein 5</fullName>
    </alternativeName>
</protein>
<proteinExistence type="inferred from homology"/>
<keyword id="KW-0256">Endoplasmic reticulum</keyword>
<keyword id="KW-0325">Glycoprotein</keyword>
<keyword id="KW-0415">Karyogamy</keyword>
<keyword id="KW-0472">Membrane</keyword>
<keyword id="KW-0539">Nucleus</keyword>
<keyword id="KW-1185">Reference proteome</keyword>
<keyword id="KW-0732">Signal</keyword>
<keyword id="KW-0812">Transmembrane</keyword>
<keyword id="KW-1133">Transmembrane helix</keyword>
<dbReference type="EMBL" id="AE016817">
    <property type="protein sequence ID" value="AAS52063.2"/>
    <property type="molecule type" value="Genomic_DNA"/>
</dbReference>
<dbReference type="RefSeq" id="NP_984239.2">
    <property type="nucleotide sequence ID" value="NM_209592.2"/>
</dbReference>
<dbReference type="SMR" id="Q759Y0"/>
<dbReference type="FunCoup" id="Q759Y0">
    <property type="interactions" value="40"/>
</dbReference>
<dbReference type="GlyCosmos" id="Q759Y0">
    <property type="glycosylation" value="3 sites, No reported glycans"/>
</dbReference>
<dbReference type="EnsemblFungi" id="AAS52063">
    <property type="protein sequence ID" value="AAS52063"/>
    <property type="gene ID" value="AGOS_ADR143W"/>
</dbReference>
<dbReference type="GeneID" id="4620400"/>
<dbReference type="KEGG" id="ago:AGOS_ADR143W"/>
<dbReference type="eggNOG" id="ENOG502QVCQ">
    <property type="taxonomic scope" value="Eukaryota"/>
</dbReference>
<dbReference type="HOGENOM" id="CLU_042075_0_0_1"/>
<dbReference type="InParanoid" id="Q759Y0"/>
<dbReference type="OMA" id="LSICEFQ"/>
<dbReference type="OrthoDB" id="5311848at2759"/>
<dbReference type="Proteomes" id="UP000000591">
    <property type="component" value="Chromosome IV"/>
</dbReference>
<dbReference type="GO" id="GO:0005789">
    <property type="term" value="C:endoplasmic reticulum membrane"/>
    <property type="evidence" value="ECO:0000318"/>
    <property type="project" value="GO_Central"/>
</dbReference>
<dbReference type="GO" id="GO:0031965">
    <property type="term" value="C:nuclear membrane"/>
    <property type="evidence" value="ECO:0007669"/>
    <property type="project" value="UniProtKB-SubCell"/>
</dbReference>
<dbReference type="GO" id="GO:0000742">
    <property type="term" value="P:karyogamy involved in conjugation with cellular fusion"/>
    <property type="evidence" value="ECO:0000318"/>
    <property type="project" value="GO_Central"/>
</dbReference>
<dbReference type="GO" id="GO:0048288">
    <property type="term" value="P:nuclear membrane fusion involved in karyogamy"/>
    <property type="evidence" value="ECO:0000318"/>
    <property type="project" value="GO_Central"/>
</dbReference>
<dbReference type="InterPro" id="IPR007292">
    <property type="entry name" value="Nuclear_fusion_Kar5"/>
</dbReference>
<dbReference type="PANTHER" id="PTHR28012">
    <property type="entry name" value="NUCLEAR FUSION PROTEIN KAR5"/>
    <property type="match status" value="1"/>
</dbReference>
<dbReference type="PANTHER" id="PTHR28012:SF1">
    <property type="entry name" value="NUCLEAR FUSION PROTEIN KAR5"/>
    <property type="match status" value="1"/>
</dbReference>
<dbReference type="Pfam" id="PF04163">
    <property type="entry name" value="Tht1"/>
    <property type="match status" value="2"/>
</dbReference>